<reference key="1">
    <citation type="journal article" date="2007" name="PLoS Genet.">
        <title>Patterns and implications of gene gain and loss in the evolution of Prochlorococcus.</title>
        <authorList>
            <person name="Kettler G.C."/>
            <person name="Martiny A.C."/>
            <person name="Huang K."/>
            <person name="Zucker J."/>
            <person name="Coleman M.L."/>
            <person name="Rodrigue S."/>
            <person name="Chen F."/>
            <person name="Lapidus A."/>
            <person name="Ferriera S."/>
            <person name="Johnson J."/>
            <person name="Steglich C."/>
            <person name="Church G.M."/>
            <person name="Richardson P."/>
            <person name="Chisholm S.W."/>
        </authorList>
    </citation>
    <scope>NUCLEOTIDE SEQUENCE [LARGE SCALE GENOMIC DNA]</scope>
    <source>
        <strain>MIT 9303</strain>
    </source>
</reference>
<name>NU4C_PROM3</name>
<sequence length="563" mass="61292">MLEFAISAPLDTGAELLSDQVSANFPWLSLSILFPIVGAFLVPFIPDEGEGKQVRWFALGIALVTFVITVAAYLYGYDPSLSGLQLSERVSWLPDLGLTWAVGADGISMPLILLTSFITALAVLAAWPVTFKPKLFFFLILAMDGGQIAVFAVQDMLLFFLAWELELLPVYLLLAIWGGKKRQYAATKFIIYTAGSSLFILLVALAMGFFGGGTPNFEYTNLAQQSFGTGFQLLCYAGLLIAFGVKLPIVPLHTWLPDAHGEATAPVHMLLAGILLKMGGYALMRFNAQLLPEAHAQFAPLLIVLGVVNIIYAALTSFAQRNLKRKIAYSSISHMGFVLIGIGSFSALGTSGAMLQMISHGLIGASLFFLVGATYDRTHTLQLDEMGGVGQKMRIMFALWTVCALASLALPGMSGFVSELMVFVGFATDEAYTLTFRIVIAGLAAIGVILTPIYLLSMLREIFFGKENDQLVSHTNLVDAEPREVYIISCLLVPIIGIGLYPRLMTDSYTASIQELVKRDELALQRIKKPSALMIRNTTMTPAVVSSPRLPISQTRSEQLTRK</sequence>
<accession>A2CD41</accession>
<feature type="chain" id="PRO_0000343238" description="NAD(P)H-quinone oxidoreductase chain 4">
    <location>
        <begin position="1"/>
        <end position="563"/>
    </location>
</feature>
<feature type="transmembrane region" description="Helical" evidence="1">
    <location>
        <begin position="25"/>
        <end position="45"/>
    </location>
</feature>
<feature type="transmembrane region" description="Helical" evidence="1">
    <location>
        <begin position="56"/>
        <end position="76"/>
    </location>
</feature>
<feature type="transmembrane region" description="Helical" evidence="1">
    <location>
        <begin position="90"/>
        <end position="110"/>
    </location>
</feature>
<feature type="transmembrane region" description="Helical" evidence="1">
    <location>
        <begin position="111"/>
        <end position="131"/>
    </location>
</feature>
<feature type="transmembrane region" description="Helical" evidence="1">
    <location>
        <begin position="133"/>
        <end position="153"/>
    </location>
</feature>
<feature type="transmembrane region" description="Helical" evidence="1">
    <location>
        <begin position="157"/>
        <end position="177"/>
    </location>
</feature>
<feature type="transmembrane region" description="Helical" evidence="1">
    <location>
        <begin position="189"/>
        <end position="209"/>
    </location>
</feature>
<feature type="transmembrane region" description="Helical" evidence="1">
    <location>
        <begin position="230"/>
        <end position="250"/>
    </location>
</feature>
<feature type="transmembrane region" description="Helical" evidence="1">
    <location>
        <begin position="264"/>
        <end position="284"/>
    </location>
</feature>
<feature type="transmembrane region" description="Helical" evidence="1">
    <location>
        <begin position="298"/>
        <end position="318"/>
    </location>
</feature>
<feature type="transmembrane region" description="Helical" evidence="1">
    <location>
        <begin position="335"/>
        <end position="355"/>
    </location>
</feature>
<feature type="transmembrane region" description="Helical" evidence="1">
    <location>
        <begin position="356"/>
        <end position="376"/>
    </location>
</feature>
<feature type="transmembrane region" description="Helical" evidence="1">
    <location>
        <begin position="397"/>
        <end position="417"/>
    </location>
</feature>
<feature type="transmembrane region" description="Helical" evidence="1">
    <location>
        <begin position="438"/>
        <end position="458"/>
    </location>
</feature>
<feature type="transmembrane region" description="Helical" evidence="1">
    <location>
        <begin position="485"/>
        <end position="505"/>
    </location>
</feature>
<protein>
    <recommendedName>
        <fullName evidence="1">NAD(P)H-quinone oxidoreductase chain 4</fullName>
        <ecNumber evidence="1">7.1.1.-</ecNumber>
    </recommendedName>
    <alternativeName>
        <fullName evidence="1">NAD(P)H dehydrogenase I, chain 4</fullName>
    </alternativeName>
    <alternativeName>
        <fullName evidence="1">NDH-1, chain 4</fullName>
    </alternativeName>
</protein>
<keyword id="KW-0472">Membrane</keyword>
<keyword id="KW-0520">NAD</keyword>
<keyword id="KW-0521">NADP</keyword>
<keyword id="KW-0618">Plastoquinone</keyword>
<keyword id="KW-0874">Quinone</keyword>
<keyword id="KW-0793">Thylakoid</keyword>
<keyword id="KW-1278">Translocase</keyword>
<keyword id="KW-0812">Transmembrane</keyword>
<keyword id="KW-1133">Transmembrane helix</keyword>
<organism>
    <name type="scientific">Prochlorococcus marinus (strain MIT 9303)</name>
    <dbReference type="NCBI Taxonomy" id="59922"/>
    <lineage>
        <taxon>Bacteria</taxon>
        <taxon>Bacillati</taxon>
        <taxon>Cyanobacteriota</taxon>
        <taxon>Cyanophyceae</taxon>
        <taxon>Synechococcales</taxon>
        <taxon>Prochlorococcaceae</taxon>
        <taxon>Prochlorococcus</taxon>
    </lineage>
</organism>
<gene>
    <name evidence="1" type="primary">ndhD</name>
    <name type="ordered locus">P9303_26711</name>
</gene>
<proteinExistence type="inferred from homology"/>
<dbReference type="EC" id="7.1.1.-" evidence="1"/>
<dbReference type="EMBL" id="CP000554">
    <property type="protein sequence ID" value="ABM79401.1"/>
    <property type="molecule type" value="Genomic_DNA"/>
</dbReference>
<dbReference type="RefSeq" id="WP_011827244.1">
    <property type="nucleotide sequence ID" value="NC_008820.1"/>
</dbReference>
<dbReference type="SMR" id="A2CD41"/>
<dbReference type="STRING" id="59922.P9303_26711"/>
<dbReference type="KEGG" id="pmf:P9303_26711"/>
<dbReference type="HOGENOM" id="CLU_007100_4_0_3"/>
<dbReference type="BioCyc" id="PMAR59922:G1G80-2341-MONOMER"/>
<dbReference type="Proteomes" id="UP000002274">
    <property type="component" value="Chromosome"/>
</dbReference>
<dbReference type="GO" id="GO:0031676">
    <property type="term" value="C:plasma membrane-derived thylakoid membrane"/>
    <property type="evidence" value="ECO:0007669"/>
    <property type="project" value="UniProtKB-SubCell"/>
</dbReference>
<dbReference type="GO" id="GO:0008137">
    <property type="term" value="F:NADH dehydrogenase (ubiquinone) activity"/>
    <property type="evidence" value="ECO:0007669"/>
    <property type="project" value="InterPro"/>
</dbReference>
<dbReference type="GO" id="GO:0048039">
    <property type="term" value="F:ubiquinone binding"/>
    <property type="evidence" value="ECO:0007669"/>
    <property type="project" value="TreeGrafter"/>
</dbReference>
<dbReference type="GO" id="GO:0042773">
    <property type="term" value="P:ATP synthesis coupled electron transport"/>
    <property type="evidence" value="ECO:0007669"/>
    <property type="project" value="InterPro"/>
</dbReference>
<dbReference type="GO" id="GO:0015990">
    <property type="term" value="P:electron transport coupled proton transport"/>
    <property type="evidence" value="ECO:0007669"/>
    <property type="project" value="TreeGrafter"/>
</dbReference>
<dbReference type="HAMAP" id="MF_00491">
    <property type="entry name" value="NDH1_NuoM"/>
    <property type="match status" value="1"/>
</dbReference>
<dbReference type="InterPro" id="IPR022997">
    <property type="entry name" value="NADH_Q_OxRdtase_chain4"/>
</dbReference>
<dbReference type="InterPro" id="IPR010227">
    <property type="entry name" value="NADH_Q_OxRdtase_chainM/4"/>
</dbReference>
<dbReference type="InterPro" id="IPR003918">
    <property type="entry name" value="NADH_UbQ_OxRdtase"/>
</dbReference>
<dbReference type="InterPro" id="IPR001750">
    <property type="entry name" value="ND/Mrp_TM"/>
</dbReference>
<dbReference type="NCBIfam" id="TIGR01972">
    <property type="entry name" value="NDH_I_M"/>
    <property type="match status" value="1"/>
</dbReference>
<dbReference type="NCBIfam" id="NF002713">
    <property type="entry name" value="PRK02546.1"/>
    <property type="match status" value="1"/>
</dbReference>
<dbReference type="NCBIfam" id="NF009212">
    <property type="entry name" value="PRK12561.1"/>
    <property type="match status" value="1"/>
</dbReference>
<dbReference type="PANTHER" id="PTHR43507:SF21">
    <property type="entry name" value="NAD(P)H-QUINONE OXIDOREDUCTASE CHAIN 4, CHLOROPLASTIC"/>
    <property type="match status" value="1"/>
</dbReference>
<dbReference type="PANTHER" id="PTHR43507">
    <property type="entry name" value="NADH-UBIQUINONE OXIDOREDUCTASE CHAIN 4"/>
    <property type="match status" value="1"/>
</dbReference>
<dbReference type="Pfam" id="PF00361">
    <property type="entry name" value="Proton_antipo_M"/>
    <property type="match status" value="1"/>
</dbReference>
<dbReference type="PRINTS" id="PR01437">
    <property type="entry name" value="NUOXDRDTASE4"/>
</dbReference>
<comment type="function">
    <text evidence="1">NDH-1 shuttles electrons from NAD(P)H, via FMN and iron-sulfur (Fe-S) centers, to quinones in the respiratory chain. The immediate electron acceptor for the enzyme in this species is believed to be plastoquinone. Couples the redox reaction to proton translocation (for every two electrons transferred, four hydrogen ions are translocated across the cytoplasmic membrane), and thus conserves the redox energy in a proton gradient.</text>
</comment>
<comment type="catalytic activity">
    <reaction evidence="1">
        <text>a plastoquinone + NADH + (n+1) H(+)(in) = a plastoquinol + NAD(+) + n H(+)(out)</text>
        <dbReference type="Rhea" id="RHEA:42608"/>
        <dbReference type="Rhea" id="RHEA-COMP:9561"/>
        <dbReference type="Rhea" id="RHEA-COMP:9562"/>
        <dbReference type="ChEBI" id="CHEBI:15378"/>
        <dbReference type="ChEBI" id="CHEBI:17757"/>
        <dbReference type="ChEBI" id="CHEBI:57540"/>
        <dbReference type="ChEBI" id="CHEBI:57945"/>
        <dbReference type="ChEBI" id="CHEBI:62192"/>
    </reaction>
</comment>
<comment type="catalytic activity">
    <reaction evidence="1">
        <text>a plastoquinone + NADPH + (n+1) H(+)(in) = a plastoquinol + NADP(+) + n H(+)(out)</text>
        <dbReference type="Rhea" id="RHEA:42612"/>
        <dbReference type="Rhea" id="RHEA-COMP:9561"/>
        <dbReference type="Rhea" id="RHEA-COMP:9562"/>
        <dbReference type="ChEBI" id="CHEBI:15378"/>
        <dbReference type="ChEBI" id="CHEBI:17757"/>
        <dbReference type="ChEBI" id="CHEBI:57783"/>
        <dbReference type="ChEBI" id="CHEBI:58349"/>
        <dbReference type="ChEBI" id="CHEBI:62192"/>
    </reaction>
</comment>
<comment type="subcellular location">
    <subcellularLocation>
        <location evidence="1">Cellular thylakoid membrane</location>
        <topology evidence="1">Multi-pass membrane protein</topology>
    </subcellularLocation>
</comment>
<comment type="similarity">
    <text evidence="1">Belongs to the complex I subunit 4 family.</text>
</comment>
<evidence type="ECO:0000255" key="1">
    <source>
        <dbReference type="HAMAP-Rule" id="MF_00491"/>
    </source>
</evidence>